<sequence>MSDGLDNEEKPPAPPLRMNSNNRDSSALNHSSKPLPMAPEEKNKKARLRSIFPGGGDKTNKKKEKERPEISLPSDFEHTIHVGFDAVTGEFTPDLYGSQMCPGKLPEGIPEQWARLLQTSNITKLEQKKNPQAVLDVLKFYDSKETVNNQKYMSFTSGDKSAHGYIAAHPSSTKTASEPPLAPPVSEEEDEEEEEEEDENEPPPVIAPRPEHTKSIYTRSVVESIASPAVPNKEVTPPSAENANSSTLYRNTDRQRKKSKMTDEEILEKLRSIVSVGDPKKKYTRFEKIGQGASGTVYTALDIATGQEVAIKQMNLQQQPKKELIINEILVMRENKNPNIVNYLDSYLVGDELWVVMEYLAGGSLTDVVTETCMDEGQIAAVCRECLQALDFLHSNQVIHRDIKSDNILLGMDGSVKLTDFGFCAQITPEQSKRSTMVGTPYWMAPEVVTRKAYGPKVDIWSLGIMAIEMVEGEPPYLNENPLRALYLIATNGTPELQNPERLSAVFRDFLNRCLEMDVDRRGSAKELLQHPFLKLAKPLSSLTPLIIAAKEAIKNSSR</sequence>
<comment type="function">
    <text evidence="2 15">Serine/threonine protein kinase that plays a role in a variety of different signaling pathways including cytoskeleton regulation, cell migration, or cell cycle regulation. Plays a role in dendrite spine morphogenesis as well as synapse formation and plasticity. Acts as a downstream effector of the small GTPases CDC42 and RAC1. Activation by the binding of active CDC42 and RAC1 results in a conformational change and a subsequent autophosphorylation on several serine and/or threonine residues. Phosphorylates MAPK4 and MAPK6 and activates the downstream target MAPKAPK5, a regulator of F-actin polymerization and cell migration. Additionally, phosphorylates TNNI3/troponin I to modulate calcium sensitivity and relaxation kinetics of thin myofilaments. May also be involved in early neuronal development. In hippocampal neurons, necessary for the formation of dendritic spines and excitatory synapses; this function is dependent on kinase activity and may be exerted by the regulation of actomyosin contractility through the phosphorylation of myosin II regulatory light chain (MLC) (By similarity).</text>
</comment>
<comment type="catalytic activity">
    <reaction>
        <text>L-seryl-[protein] + ATP = O-phospho-L-seryl-[protein] + ADP + H(+)</text>
        <dbReference type="Rhea" id="RHEA:17989"/>
        <dbReference type="Rhea" id="RHEA-COMP:9863"/>
        <dbReference type="Rhea" id="RHEA-COMP:11604"/>
        <dbReference type="ChEBI" id="CHEBI:15378"/>
        <dbReference type="ChEBI" id="CHEBI:29999"/>
        <dbReference type="ChEBI" id="CHEBI:30616"/>
        <dbReference type="ChEBI" id="CHEBI:83421"/>
        <dbReference type="ChEBI" id="CHEBI:456216"/>
        <dbReference type="EC" id="2.7.11.1"/>
    </reaction>
</comment>
<comment type="catalytic activity">
    <reaction>
        <text>L-threonyl-[protein] + ATP = O-phospho-L-threonyl-[protein] + ADP + H(+)</text>
        <dbReference type="Rhea" id="RHEA:46608"/>
        <dbReference type="Rhea" id="RHEA-COMP:11060"/>
        <dbReference type="Rhea" id="RHEA-COMP:11605"/>
        <dbReference type="ChEBI" id="CHEBI:15378"/>
        <dbReference type="ChEBI" id="CHEBI:30013"/>
        <dbReference type="ChEBI" id="CHEBI:30616"/>
        <dbReference type="ChEBI" id="CHEBI:61977"/>
        <dbReference type="ChEBI" id="CHEBI:456216"/>
        <dbReference type="EC" id="2.7.11.1"/>
    </reaction>
</comment>
<comment type="cofactor">
    <cofactor evidence="1">
        <name>Mg(2+)</name>
        <dbReference type="ChEBI" id="CHEBI:18420"/>
    </cofactor>
</comment>
<comment type="activity regulation">
    <text evidence="1">Activated by binding small G proteins. Binding of GTP-bound CDC42 or RAC1 to the autoregulatory region releases monomers from the autoinhibited dimer, enables phosphorylation of Thr-436 and allows the kinase domain to adopt an active structure (By similarity).</text>
</comment>
<comment type="subunit">
    <text evidence="1 8 10">Interacts tightly with GTP-bound but not GDP-bound CDC42/p21 and RAC1. Shows highly specific binding to the SH3 domains of phospholipase C-gamma and of adapter protein NCK. Interacts with the C-terminal of APP (By similarity). Interacts with ARHGEF6 and ARHGEF7. Interacts with GIT1 and GIT2 (PubMed:10896954).</text>
</comment>
<comment type="interaction">
    <interactant intactId="EBI-3389553">
        <id>O75914</id>
    </interactant>
    <interactant intactId="EBI-287394">
        <id>P60953-2</id>
        <label>CDC42</label>
    </interactant>
    <organismsDiffer>false</organismsDiffer>
    <experiments>2</experiments>
</comment>
<comment type="interaction">
    <interactant intactId="EBI-17483970">
        <id>O75914-2</id>
    </interactant>
    <interactant intactId="EBI-6285694">
        <id>Q9H4E5</id>
        <label>RHOJ</label>
    </interactant>
    <organismsDiffer>false</organismsDiffer>
    <experiments>3</experiments>
</comment>
<comment type="subcellular location">
    <subcellularLocation>
        <location evidence="1">Cytoplasm</location>
    </subcellularLocation>
</comment>
<comment type="alternative products">
    <event type="alternative splicing"/>
    <isoform>
        <id>O75914-1</id>
        <name>1</name>
        <name>PAK3b</name>
        <sequence type="displayed"/>
    </isoform>
    <isoform>
        <id>O75914-2</id>
        <name>2</name>
        <sequence type="described" ref="VSP_010242"/>
    </isoform>
    <isoform>
        <id>O75914-3</id>
        <name>3</name>
        <name>PAK3cb</name>
        <sequence type="described" ref="VSP_041839"/>
    </isoform>
    <isoform>
        <id>O75914-4</id>
        <name>4</name>
        <name>PAK3c</name>
        <sequence type="described" ref="VSP_041840"/>
    </isoform>
</comment>
<comment type="tissue specificity">
    <text evidence="12">Restricted to the nervous system. Highly expressed in postmitotic neurons of the developing and postnatal cerebral cortex and hippocampus.</text>
</comment>
<comment type="PTM">
    <text>Autophosphorylated when activated by CDC42/p21.</text>
</comment>
<comment type="PTM">
    <text evidence="14">Neddylated.</text>
</comment>
<comment type="disease" evidence="9 11 16">
    <disease id="DI-00727">
        <name>Intellectual developmental disorder, X-linked 30</name>
        <acronym>XLID30</acronym>
        <description>A disorder characterized by significantly below average general intellectual functioning associated with impairments in adaptive behavior and manifested during the developmental period. Intellectual deficiency is the only primary symptom of non-syndromic X-linked forms, while syndromic intellectual disability presents with associated physical, neurological and/or psychiatric manifestations.</description>
        <dbReference type="MIM" id="300558"/>
    </disease>
    <text>The disease is caused by variants affecting the gene represented in this entry.</text>
</comment>
<comment type="similarity">
    <text evidence="21">Belongs to the protein kinase superfamily. STE Ser/Thr protein kinase family. STE20 subfamily.</text>
</comment>
<accession>O75914</accession>
<accession>A8K389</accession>
<accession>B1GX77</accession>
<accession>B1GX78</accession>
<accession>B1GX79</accession>
<accession>Q5JWX1</accession>
<accession>Q5JWX2</accession>
<accession>Q7Z2D6</accession>
<accession>Q7Z2E4</accession>
<accession>Q7Z3Z8</accession>
<accession>Q8WWK5</accession>
<accession>Q8WX23</accession>
<accession>Q9P0J8</accession>
<gene>
    <name type="primary">PAK3</name>
    <name type="synonym">OPHN3</name>
</gene>
<name>PAK3_HUMAN</name>
<reference key="1">
    <citation type="journal article" date="1998" name="Nat. Genet.">
        <title>PAK3 mutation in nonsyndromic X-linked mental retardation.</title>
        <authorList>
            <person name="Allen K.M."/>
            <person name="Gleeson J.G."/>
            <person name="Bagrodia S."/>
            <person name="Partington M.W."/>
            <person name="Macmillan J.C."/>
            <person name="Cerione R.A."/>
            <person name="Mulley J.C."/>
            <person name="Walsh C.A."/>
        </authorList>
    </citation>
    <scope>NUCLEOTIDE SEQUENCE [MRNA] (ISOFORM 2)</scope>
    <scope>INVOLVEMENT IN XLID30</scope>
</reference>
<reference key="2">
    <citation type="submission" date="2000-05" db="EMBL/GenBank/DDBJ databases">
        <title>A novel gene expressed in the human adrenal gland.</title>
        <authorList>
            <person name="Jiang C."/>
            <person name="Gu J."/>
            <person name="Fu S."/>
            <person name="Ren S."/>
            <person name="Gu Y."/>
            <person name="Huang Q."/>
            <person name="Dong H."/>
            <person name="Yu Y."/>
            <person name="Fu G."/>
            <person name="Wang Y."/>
            <person name="Chen Z."/>
            <person name="Han Z."/>
        </authorList>
    </citation>
    <scope>NUCLEOTIDE SEQUENCE [MRNA] (ISOFORM 2)</scope>
    <source>
        <tissue>Adrenal gland</tissue>
    </source>
</reference>
<reference key="3">
    <citation type="journal article" date="2003" name="Mol. Biol. Evol.">
        <title>Gene diversity patterns at 10 X-chromosomal loci in humans and chimpanzees.</title>
        <authorList>
            <person name="Kitano T."/>
            <person name="Schwarz C."/>
            <person name="Nickel B."/>
            <person name="Paeaebo S."/>
        </authorList>
    </citation>
    <scope>NUCLEOTIDE SEQUENCE [MRNA] (ISOFORM 1)</scope>
</reference>
<reference key="4">
    <citation type="journal article" date="2008" name="J. Neurochem.">
        <title>The four mammalian splice variants encoded by the p21-activated kinase 3 gene have different biological properties.</title>
        <authorList>
            <person name="Kreis P."/>
            <person name="Rousseau V."/>
            <person name="Thevenot E."/>
            <person name="Combeau G."/>
            <person name="Barnier J.V."/>
        </authorList>
    </citation>
    <scope>NUCLEOTIDE SEQUENCE [MRNA] (ISOFORMS 1; 3 AND 4)</scope>
    <source>
        <tissue>Brain</tissue>
    </source>
</reference>
<reference key="5">
    <citation type="journal article" date="2004" name="Nat. Genet.">
        <title>Complete sequencing and characterization of 21,243 full-length human cDNAs.</title>
        <authorList>
            <person name="Ota T."/>
            <person name="Suzuki Y."/>
            <person name="Nishikawa T."/>
            <person name="Otsuki T."/>
            <person name="Sugiyama T."/>
            <person name="Irie R."/>
            <person name="Wakamatsu A."/>
            <person name="Hayashi K."/>
            <person name="Sato H."/>
            <person name="Nagai K."/>
            <person name="Kimura K."/>
            <person name="Makita H."/>
            <person name="Sekine M."/>
            <person name="Obayashi M."/>
            <person name="Nishi T."/>
            <person name="Shibahara T."/>
            <person name="Tanaka T."/>
            <person name="Ishii S."/>
            <person name="Yamamoto J."/>
            <person name="Saito K."/>
            <person name="Kawai Y."/>
            <person name="Isono Y."/>
            <person name="Nakamura Y."/>
            <person name="Nagahari K."/>
            <person name="Murakami K."/>
            <person name="Yasuda T."/>
            <person name="Iwayanagi T."/>
            <person name="Wagatsuma M."/>
            <person name="Shiratori A."/>
            <person name="Sudo H."/>
            <person name="Hosoiri T."/>
            <person name="Kaku Y."/>
            <person name="Kodaira H."/>
            <person name="Kondo H."/>
            <person name="Sugawara M."/>
            <person name="Takahashi M."/>
            <person name="Kanda K."/>
            <person name="Yokoi T."/>
            <person name="Furuya T."/>
            <person name="Kikkawa E."/>
            <person name="Omura Y."/>
            <person name="Abe K."/>
            <person name="Kamihara K."/>
            <person name="Katsuta N."/>
            <person name="Sato K."/>
            <person name="Tanikawa M."/>
            <person name="Yamazaki M."/>
            <person name="Ninomiya K."/>
            <person name="Ishibashi T."/>
            <person name="Yamashita H."/>
            <person name="Murakawa K."/>
            <person name="Fujimori K."/>
            <person name="Tanai H."/>
            <person name="Kimata M."/>
            <person name="Watanabe M."/>
            <person name="Hiraoka S."/>
            <person name="Chiba Y."/>
            <person name="Ishida S."/>
            <person name="Ono Y."/>
            <person name="Takiguchi S."/>
            <person name="Watanabe S."/>
            <person name="Yosida M."/>
            <person name="Hotuta T."/>
            <person name="Kusano J."/>
            <person name="Kanehori K."/>
            <person name="Takahashi-Fujii A."/>
            <person name="Hara H."/>
            <person name="Tanase T.-O."/>
            <person name="Nomura Y."/>
            <person name="Togiya S."/>
            <person name="Komai F."/>
            <person name="Hara R."/>
            <person name="Takeuchi K."/>
            <person name="Arita M."/>
            <person name="Imose N."/>
            <person name="Musashino K."/>
            <person name="Yuuki H."/>
            <person name="Oshima A."/>
            <person name="Sasaki N."/>
            <person name="Aotsuka S."/>
            <person name="Yoshikawa Y."/>
            <person name="Matsunawa H."/>
            <person name="Ichihara T."/>
            <person name="Shiohata N."/>
            <person name="Sano S."/>
            <person name="Moriya S."/>
            <person name="Momiyama H."/>
            <person name="Satoh N."/>
            <person name="Takami S."/>
            <person name="Terashima Y."/>
            <person name="Suzuki O."/>
            <person name="Nakagawa S."/>
            <person name="Senoh A."/>
            <person name="Mizoguchi H."/>
            <person name="Goto Y."/>
            <person name="Shimizu F."/>
            <person name="Wakebe H."/>
            <person name="Hishigaki H."/>
            <person name="Watanabe T."/>
            <person name="Sugiyama A."/>
            <person name="Takemoto M."/>
            <person name="Kawakami B."/>
            <person name="Yamazaki M."/>
            <person name="Watanabe K."/>
            <person name="Kumagai A."/>
            <person name="Itakura S."/>
            <person name="Fukuzumi Y."/>
            <person name="Fujimori Y."/>
            <person name="Komiyama M."/>
            <person name="Tashiro H."/>
            <person name="Tanigami A."/>
            <person name="Fujiwara T."/>
            <person name="Ono T."/>
            <person name="Yamada K."/>
            <person name="Fujii Y."/>
            <person name="Ozaki K."/>
            <person name="Hirao M."/>
            <person name="Ohmori Y."/>
            <person name="Kawabata A."/>
            <person name="Hikiji T."/>
            <person name="Kobatake N."/>
            <person name="Inagaki H."/>
            <person name="Ikema Y."/>
            <person name="Okamoto S."/>
            <person name="Okitani R."/>
            <person name="Kawakami T."/>
            <person name="Noguchi S."/>
            <person name="Itoh T."/>
            <person name="Shigeta K."/>
            <person name="Senba T."/>
            <person name="Matsumura K."/>
            <person name="Nakajima Y."/>
            <person name="Mizuno T."/>
            <person name="Morinaga M."/>
            <person name="Sasaki M."/>
            <person name="Togashi T."/>
            <person name="Oyama M."/>
            <person name="Hata H."/>
            <person name="Watanabe M."/>
            <person name="Komatsu T."/>
            <person name="Mizushima-Sugano J."/>
            <person name="Satoh T."/>
            <person name="Shirai Y."/>
            <person name="Takahashi Y."/>
            <person name="Nakagawa K."/>
            <person name="Okumura K."/>
            <person name="Nagase T."/>
            <person name="Nomura N."/>
            <person name="Kikuchi H."/>
            <person name="Masuho Y."/>
            <person name="Yamashita R."/>
            <person name="Nakai K."/>
            <person name="Yada T."/>
            <person name="Nakamura Y."/>
            <person name="Ohara O."/>
            <person name="Isogai T."/>
            <person name="Sugano S."/>
        </authorList>
    </citation>
    <scope>NUCLEOTIDE SEQUENCE [LARGE SCALE MRNA] (ISOFORM 2)</scope>
    <source>
        <tissue>Brain</tissue>
    </source>
</reference>
<reference key="6">
    <citation type="journal article" date="2005" name="Nature">
        <title>The DNA sequence of the human X chromosome.</title>
        <authorList>
            <person name="Ross M.T."/>
            <person name="Grafham D.V."/>
            <person name="Coffey A.J."/>
            <person name="Scherer S."/>
            <person name="McLay K."/>
            <person name="Muzny D."/>
            <person name="Platzer M."/>
            <person name="Howell G.R."/>
            <person name="Burrows C."/>
            <person name="Bird C.P."/>
            <person name="Frankish A."/>
            <person name="Lovell F.L."/>
            <person name="Howe K.L."/>
            <person name="Ashurst J.L."/>
            <person name="Fulton R.S."/>
            <person name="Sudbrak R."/>
            <person name="Wen G."/>
            <person name="Jones M.C."/>
            <person name="Hurles M.E."/>
            <person name="Andrews T.D."/>
            <person name="Scott C.E."/>
            <person name="Searle S."/>
            <person name="Ramser J."/>
            <person name="Whittaker A."/>
            <person name="Deadman R."/>
            <person name="Carter N.P."/>
            <person name="Hunt S.E."/>
            <person name="Chen R."/>
            <person name="Cree A."/>
            <person name="Gunaratne P."/>
            <person name="Havlak P."/>
            <person name="Hodgson A."/>
            <person name="Metzker M.L."/>
            <person name="Richards S."/>
            <person name="Scott G."/>
            <person name="Steffen D."/>
            <person name="Sodergren E."/>
            <person name="Wheeler D.A."/>
            <person name="Worley K.C."/>
            <person name="Ainscough R."/>
            <person name="Ambrose K.D."/>
            <person name="Ansari-Lari M.A."/>
            <person name="Aradhya S."/>
            <person name="Ashwell R.I."/>
            <person name="Babbage A.K."/>
            <person name="Bagguley C.L."/>
            <person name="Ballabio A."/>
            <person name="Banerjee R."/>
            <person name="Barker G.E."/>
            <person name="Barlow K.F."/>
            <person name="Barrett I.P."/>
            <person name="Bates K.N."/>
            <person name="Beare D.M."/>
            <person name="Beasley H."/>
            <person name="Beasley O."/>
            <person name="Beck A."/>
            <person name="Bethel G."/>
            <person name="Blechschmidt K."/>
            <person name="Brady N."/>
            <person name="Bray-Allen S."/>
            <person name="Bridgeman A.M."/>
            <person name="Brown A.J."/>
            <person name="Brown M.J."/>
            <person name="Bonnin D."/>
            <person name="Bruford E.A."/>
            <person name="Buhay C."/>
            <person name="Burch P."/>
            <person name="Burford D."/>
            <person name="Burgess J."/>
            <person name="Burrill W."/>
            <person name="Burton J."/>
            <person name="Bye J.M."/>
            <person name="Carder C."/>
            <person name="Carrel L."/>
            <person name="Chako J."/>
            <person name="Chapman J.C."/>
            <person name="Chavez D."/>
            <person name="Chen E."/>
            <person name="Chen G."/>
            <person name="Chen Y."/>
            <person name="Chen Z."/>
            <person name="Chinault C."/>
            <person name="Ciccodicola A."/>
            <person name="Clark S.Y."/>
            <person name="Clarke G."/>
            <person name="Clee C.M."/>
            <person name="Clegg S."/>
            <person name="Clerc-Blankenburg K."/>
            <person name="Clifford K."/>
            <person name="Cobley V."/>
            <person name="Cole C.G."/>
            <person name="Conquer J.S."/>
            <person name="Corby N."/>
            <person name="Connor R.E."/>
            <person name="David R."/>
            <person name="Davies J."/>
            <person name="Davis C."/>
            <person name="Davis J."/>
            <person name="Delgado O."/>
            <person name="Deshazo D."/>
            <person name="Dhami P."/>
            <person name="Ding Y."/>
            <person name="Dinh H."/>
            <person name="Dodsworth S."/>
            <person name="Draper H."/>
            <person name="Dugan-Rocha S."/>
            <person name="Dunham A."/>
            <person name="Dunn M."/>
            <person name="Durbin K.J."/>
            <person name="Dutta I."/>
            <person name="Eades T."/>
            <person name="Ellwood M."/>
            <person name="Emery-Cohen A."/>
            <person name="Errington H."/>
            <person name="Evans K.L."/>
            <person name="Faulkner L."/>
            <person name="Francis F."/>
            <person name="Frankland J."/>
            <person name="Fraser A.E."/>
            <person name="Galgoczy P."/>
            <person name="Gilbert J."/>
            <person name="Gill R."/>
            <person name="Gloeckner G."/>
            <person name="Gregory S.G."/>
            <person name="Gribble S."/>
            <person name="Griffiths C."/>
            <person name="Grocock R."/>
            <person name="Gu Y."/>
            <person name="Gwilliam R."/>
            <person name="Hamilton C."/>
            <person name="Hart E.A."/>
            <person name="Hawes A."/>
            <person name="Heath P.D."/>
            <person name="Heitmann K."/>
            <person name="Hennig S."/>
            <person name="Hernandez J."/>
            <person name="Hinzmann B."/>
            <person name="Ho S."/>
            <person name="Hoffs M."/>
            <person name="Howden P.J."/>
            <person name="Huckle E.J."/>
            <person name="Hume J."/>
            <person name="Hunt P.J."/>
            <person name="Hunt A.R."/>
            <person name="Isherwood J."/>
            <person name="Jacob L."/>
            <person name="Johnson D."/>
            <person name="Jones S."/>
            <person name="de Jong P.J."/>
            <person name="Joseph S.S."/>
            <person name="Keenan S."/>
            <person name="Kelly S."/>
            <person name="Kershaw J.K."/>
            <person name="Khan Z."/>
            <person name="Kioschis P."/>
            <person name="Klages S."/>
            <person name="Knights A.J."/>
            <person name="Kosiura A."/>
            <person name="Kovar-Smith C."/>
            <person name="Laird G.K."/>
            <person name="Langford C."/>
            <person name="Lawlor S."/>
            <person name="Leversha M."/>
            <person name="Lewis L."/>
            <person name="Liu W."/>
            <person name="Lloyd C."/>
            <person name="Lloyd D.M."/>
            <person name="Loulseged H."/>
            <person name="Loveland J.E."/>
            <person name="Lovell J.D."/>
            <person name="Lozado R."/>
            <person name="Lu J."/>
            <person name="Lyne R."/>
            <person name="Ma J."/>
            <person name="Maheshwari M."/>
            <person name="Matthews L.H."/>
            <person name="McDowall J."/>
            <person name="McLaren S."/>
            <person name="McMurray A."/>
            <person name="Meidl P."/>
            <person name="Meitinger T."/>
            <person name="Milne S."/>
            <person name="Miner G."/>
            <person name="Mistry S.L."/>
            <person name="Morgan M."/>
            <person name="Morris S."/>
            <person name="Mueller I."/>
            <person name="Mullikin J.C."/>
            <person name="Nguyen N."/>
            <person name="Nordsiek G."/>
            <person name="Nyakatura G."/>
            <person name="O'dell C.N."/>
            <person name="Okwuonu G."/>
            <person name="Palmer S."/>
            <person name="Pandian R."/>
            <person name="Parker D."/>
            <person name="Parrish J."/>
            <person name="Pasternak S."/>
            <person name="Patel D."/>
            <person name="Pearce A.V."/>
            <person name="Pearson D.M."/>
            <person name="Pelan S.E."/>
            <person name="Perez L."/>
            <person name="Porter K.M."/>
            <person name="Ramsey Y."/>
            <person name="Reichwald K."/>
            <person name="Rhodes S."/>
            <person name="Ridler K.A."/>
            <person name="Schlessinger D."/>
            <person name="Schueler M.G."/>
            <person name="Sehra H.K."/>
            <person name="Shaw-Smith C."/>
            <person name="Shen H."/>
            <person name="Sheridan E.M."/>
            <person name="Shownkeen R."/>
            <person name="Skuce C.D."/>
            <person name="Smith M.L."/>
            <person name="Sotheran E.C."/>
            <person name="Steingruber H.E."/>
            <person name="Steward C.A."/>
            <person name="Storey R."/>
            <person name="Swann R.M."/>
            <person name="Swarbreck D."/>
            <person name="Tabor P.E."/>
            <person name="Taudien S."/>
            <person name="Taylor T."/>
            <person name="Teague B."/>
            <person name="Thomas K."/>
            <person name="Thorpe A."/>
            <person name="Timms K."/>
            <person name="Tracey A."/>
            <person name="Trevanion S."/>
            <person name="Tromans A.C."/>
            <person name="d'Urso M."/>
            <person name="Verduzco D."/>
            <person name="Villasana D."/>
            <person name="Waldron L."/>
            <person name="Wall M."/>
            <person name="Wang Q."/>
            <person name="Warren J."/>
            <person name="Warry G.L."/>
            <person name="Wei X."/>
            <person name="West A."/>
            <person name="Whitehead S.L."/>
            <person name="Whiteley M.N."/>
            <person name="Wilkinson J.E."/>
            <person name="Willey D.L."/>
            <person name="Williams G."/>
            <person name="Williams L."/>
            <person name="Williamson A."/>
            <person name="Williamson H."/>
            <person name="Wilming L."/>
            <person name="Woodmansey R.L."/>
            <person name="Wray P.W."/>
            <person name="Yen J."/>
            <person name="Zhang J."/>
            <person name="Zhou J."/>
            <person name="Zoghbi H."/>
            <person name="Zorilla S."/>
            <person name="Buck D."/>
            <person name="Reinhardt R."/>
            <person name="Poustka A."/>
            <person name="Rosenthal A."/>
            <person name="Lehrach H."/>
            <person name="Meindl A."/>
            <person name="Minx P.J."/>
            <person name="Hillier L.W."/>
            <person name="Willard H.F."/>
            <person name="Wilson R.K."/>
            <person name="Waterston R.H."/>
            <person name="Rice C.M."/>
            <person name="Vaudin M."/>
            <person name="Coulson A."/>
            <person name="Nelson D.L."/>
            <person name="Weinstock G."/>
            <person name="Sulston J.E."/>
            <person name="Durbin R.M."/>
            <person name="Hubbard T."/>
            <person name="Gibbs R.A."/>
            <person name="Beck S."/>
            <person name="Rogers J."/>
            <person name="Bentley D.R."/>
        </authorList>
    </citation>
    <scope>NUCLEOTIDE SEQUENCE [LARGE SCALE GENOMIC DNA]</scope>
</reference>
<reference key="7">
    <citation type="submission" date="2005-09" db="EMBL/GenBank/DDBJ databases">
        <authorList>
            <person name="Mural R.J."/>
            <person name="Istrail S."/>
            <person name="Sutton G.G."/>
            <person name="Florea L."/>
            <person name="Halpern A.L."/>
            <person name="Mobarry C.M."/>
            <person name="Lippert R."/>
            <person name="Walenz B."/>
            <person name="Shatkay H."/>
            <person name="Dew I."/>
            <person name="Miller J.R."/>
            <person name="Flanigan M.J."/>
            <person name="Edwards N.J."/>
            <person name="Bolanos R."/>
            <person name="Fasulo D."/>
            <person name="Halldorsson B.V."/>
            <person name="Hannenhalli S."/>
            <person name="Turner R."/>
            <person name="Yooseph S."/>
            <person name="Lu F."/>
            <person name="Nusskern D.R."/>
            <person name="Shue B.C."/>
            <person name="Zheng X.H."/>
            <person name="Zhong F."/>
            <person name="Delcher A.L."/>
            <person name="Huson D.H."/>
            <person name="Kravitz S.A."/>
            <person name="Mouchard L."/>
            <person name="Reinert K."/>
            <person name="Remington K.A."/>
            <person name="Clark A.G."/>
            <person name="Waterman M.S."/>
            <person name="Eichler E.E."/>
            <person name="Adams M.D."/>
            <person name="Hunkapiller M.W."/>
            <person name="Myers E.W."/>
            <person name="Venter J.C."/>
        </authorList>
    </citation>
    <scope>NUCLEOTIDE SEQUENCE [LARGE SCALE GENOMIC DNA]</scope>
</reference>
<reference key="8">
    <citation type="journal article" date="2000" name="J. Biol. Chem.">
        <title>The GIT family of ADP-ribosylation factor GTPase-activating proteins. Functional diversity of GIT2 through alternative splicing.</title>
        <authorList>
            <person name="Premont R.T."/>
            <person name="Claing A."/>
            <person name="Vitale N."/>
            <person name="Perry S.J."/>
            <person name="Lefkowitz R.J."/>
        </authorList>
    </citation>
    <scope>INTERACTION WITH GIT1 AND GIT2</scope>
</reference>
<reference key="9">
    <citation type="journal article" date="2001" name="J. Biol. Chem.">
        <title>The mechanism of PAK activation. Autophosphorylation events in both regulatory and kinase domains control activity.</title>
        <authorList>
            <person name="Chong C."/>
            <person name="Tan L."/>
            <person name="Lim L."/>
            <person name="Manser E."/>
        </authorList>
    </citation>
    <scope>AUTOPHOSPHORYLATION</scope>
</reference>
<reference key="10">
    <citation type="journal article" date="2002" name="J. Biol. Chem.">
        <title>Regulation of the Cool/Pix proteins: key binding partners of the Cdc42/Rac targets, the p21-activated kinases.</title>
        <authorList>
            <person name="Feng Q."/>
            <person name="Albeck J.G."/>
            <person name="Cerione R.A."/>
            <person name="Yang W."/>
        </authorList>
    </citation>
    <scope>INTERACTION WITH ARHGEF6 AND ARHGEF7</scope>
</reference>
<reference key="11">
    <citation type="journal article" date="2003" name="J. Neurosci.">
        <title>DNA synthesis and neuronal apoptosis caused by familial Alzheimer disease mutants of the amyloid precursor protein are mediated by the p21 activated kinase PAK3.</title>
        <authorList>
            <person name="McPhie D.L."/>
            <person name="Coopersmith R."/>
            <person name="Hines-Peralta A."/>
            <person name="Chen Y."/>
            <person name="Ivins K.J."/>
            <person name="Manly S.P."/>
            <person name="Kozlowski M.R."/>
            <person name="Neve K.A."/>
            <person name="Neve R.L."/>
        </authorList>
    </citation>
    <scope>TISSUE SPECIFICITY</scope>
</reference>
<reference key="12">
    <citation type="journal article" date="2010" name="PLoS ONE">
        <title>Development and validation of a method for profiling post-translational modification activities using protein microarrays.</title>
        <authorList>
            <person name="Del Rincon S.V."/>
            <person name="Rogers J."/>
            <person name="Widschwendter M."/>
            <person name="Sun D."/>
            <person name="Sieburg H.B."/>
            <person name="Spruck C."/>
        </authorList>
    </citation>
    <scope>NEDDYLATION</scope>
</reference>
<reference key="13">
    <citation type="journal article" date="2011" name="J. Biol. Chem.">
        <title>Activation loop phosphorylation of ERK3/ERK4 by group I p21-activated kinases (PAKs) defines a novel PAK-ERK3/4-MAPK-activated protein kinase 5 signaling pathway.</title>
        <authorList>
            <person name="Deleris P."/>
            <person name="Trost M."/>
            <person name="Topisirovic I."/>
            <person name="Tanguay P.L."/>
            <person name="Borden K.L."/>
            <person name="Thibault P."/>
            <person name="Meloche S."/>
        </authorList>
    </citation>
    <scope>FUNCTION IN PHOSPHORYLATION OF MAPK4 AND MAPK6</scope>
</reference>
<reference key="14">
    <citation type="journal article" date="2009" name="Cell. Signal.">
        <title>PAK signalling in neuronal physiology.</title>
        <authorList>
            <person name="Kreis P."/>
            <person name="Barnier J.V."/>
        </authorList>
    </citation>
    <scope>REVIEW ON FUNCTION</scope>
</reference>
<reference key="15">
    <citation type="journal article" date="2000" name="Am. J. Med. Genet.">
        <title>Missense mutation in PAK3, R67C, causes X-linked nonspecific mental retardation.</title>
        <authorList>
            <person name="Bienvenu T."/>
            <person name="des Portes V."/>
            <person name="McDonell N."/>
            <person name="Carrie A."/>
            <person name="Zemni R."/>
            <person name="Couvert P."/>
            <person name="Ropers H.-H."/>
            <person name="Moraine C."/>
            <person name="van Bokhoven H."/>
            <person name="Fryns J.-P."/>
            <person name="Allen K."/>
            <person name="Walsh C.A."/>
            <person name="Boue J."/>
            <person name="Kahn A."/>
            <person name="Chelly J."/>
            <person name="Beldjord C."/>
        </authorList>
    </citation>
    <scope>VARIANT XLID30 CYS-67</scope>
</reference>
<reference key="16">
    <citation type="journal article" date="2003" name="Am. J. Med. Genet. A">
        <title>X-linked mild non-syndromic mental retardation with neuropsychiatric problems and the missense mutation A365E in PAK3.</title>
        <authorList>
            <person name="Gedeon A.K."/>
            <person name="Nelson J."/>
            <person name="Gecz J."/>
            <person name="Mulley J.C."/>
        </authorList>
    </citation>
    <scope>VARIANT XLID30 GLU-380</scope>
</reference>
<reference key="17">
    <citation type="journal article" date="2007" name="Nature">
        <title>Patterns of somatic mutation in human cancer genomes.</title>
        <authorList>
            <person name="Greenman C."/>
            <person name="Stephens P."/>
            <person name="Smith R."/>
            <person name="Dalgliesh G.L."/>
            <person name="Hunter C."/>
            <person name="Bignell G."/>
            <person name="Davies H."/>
            <person name="Teague J."/>
            <person name="Butler A."/>
            <person name="Stevens C."/>
            <person name="Edkins S."/>
            <person name="O'Meara S."/>
            <person name="Vastrik I."/>
            <person name="Schmidt E.E."/>
            <person name="Avis T."/>
            <person name="Barthorpe S."/>
            <person name="Bhamra G."/>
            <person name="Buck G."/>
            <person name="Choudhury B."/>
            <person name="Clements J."/>
            <person name="Cole J."/>
            <person name="Dicks E."/>
            <person name="Forbes S."/>
            <person name="Gray K."/>
            <person name="Halliday K."/>
            <person name="Harrison R."/>
            <person name="Hills K."/>
            <person name="Hinton J."/>
            <person name="Jenkinson A."/>
            <person name="Jones D."/>
            <person name="Menzies A."/>
            <person name="Mironenko T."/>
            <person name="Perry J."/>
            <person name="Raine K."/>
            <person name="Richardson D."/>
            <person name="Shepherd R."/>
            <person name="Small A."/>
            <person name="Tofts C."/>
            <person name="Varian J."/>
            <person name="Webb T."/>
            <person name="West S."/>
            <person name="Widaa S."/>
            <person name="Yates A."/>
            <person name="Cahill D.P."/>
            <person name="Louis D.N."/>
            <person name="Goldstraw P."/>
            <person name="Nicholson A.G."/>
            <person name="Brasseur F."/>
            <person name="Looijenga L."/>
            <person name="Weber B.L."/>
            <person name="Chiew Y.-E."/>
            <person name="DeFazio A."/>
            <person name="Greaves M.F."/>
            <person name="Green A.R."/>
            <person name="Campbell P."/>
            <person name="Birney E."/>
            <person name="Easton D.F."/>
            <person name="Chenevix-Trench G."/>
            <person name="Tan M.-H."/>
            <person name="Khoo S.K."/>
            <person name="Teh B.T."/>
            <person name="Yuen S.T."/>
            <person name="Leung S.Y."/>
            <person name="Wooster R."/>
            <person name="Futreal P.A."/>
            <person name="Stratton M.R."/>
        </authorList>
    </citation>
    <scope>VARIANT [LARGE SCALE ANALYSIS] SER-440</scope>
</reference>
<keyword id="KW-0002">3D-structure</keyword>
<keyword id="KW-0021">Allosteric enzyme</keyword>
<keyword id="KW-0025">Alternative splicing</keyword>
<keyword id="KW-0067">ATP-binding</keyword>
<keyword id="KW-0963">Cytoplasm</keyword>
<keyword id="KW-0217">Developmental protein</keyword>
<keyword id="KW-0225">Disease variant</keyword>
<keyword id="KW-0991">Intellectual disability</keyword>
<keyword id="KW-0418">Kinase</keyword>
<keyword id="KW-0460">Magnesium</keyword>
<keyword id="KW-0479">Metal-binding</keyword>
<keyword id="KW-0547">Nucleotide-binding</keyword>
<keyword id="KW-0597">Phosphoprotein</keyword>
<keyword id="KW-1267">Proteomics identification</keyword>
<keyword id="KW-1185">Reference proteome</keyword>
<keyword id="KW-0723">Serine/threonine-protein kinase</keyword>
<keyword id="KW-0729">SH3-binding</keyword>
<keyword id="KW-0808">Transferase</keyword>
<keyword id="KW-0832">Ubl conjugation</keyword>
<proteinExistence type="evidence at protein level"/>
<organism>
    <name type="scientific">Homo sapiens</name>
    <name type="common">Human</name>
    <dbReference type="NCBI Taxonomy" id="9606"/>
    <lineage>
        <taxon>Eukaryota</taxon>
        <taxon>Metazoa</taxon>
        <taxon>Chordata</taxon>
        <taxon>Craniata</taxon>
        <taxon>Vertebrata</taxon>
        <taxon>Euteleostomi</taxon>
        <taxon>Mammalia</taxon>
        <taxon>Eutheria</taxon>
        <taxon>Euarchontoglires</taxon>
        <taxon>Primates</taxon>
        <taxon>Haplorrhini</taxon>
        <taxon>Catarrhini</taxon>
        <taxon>Hominidae</taxon>
        <taxon>Homo</taxon>
    </lineage>
</organism>
<protein>
    <recommendedName>
        <fullName>Serine/threonine-protein kinase PAK 3</fullName>
        <ecNumber>2.7.11.1</ecNumber>
    </recommendedName>
    <alternativeName>
        <fullName>Beta-PAK</fullName>
    </alternativeName>
    <alternativeName>
        <fullName>Oligophrenin-3</fullName>
    </alternativeName>
    <alternativeName>
        <fullName>p21-activated kinase 3</fullName>
        <shortName>PAK-3</shortName>
    </alternativeName>
</protein>
<evidence type="ECO:0000250" key="1"/>
<evidence type="ECO:0000250" key="2">
    <source>
        <dbReference type="UniProtKB" id="Q61036"/>
    </source>
</evidence>
<evidence type="ECO:0000250" key="3">
    <source>
        <dbReference type="UniProtKB" id="Q62829"/>
    </source>
</evidence>
<evidence type="ECO:0000255" key="4">
    <source>
        <dbReference type="PROSITE-ProRule" id="PRU00057"/>
    </source>
</evidence>
<evidence type="ECO:0000255" key="5">
    <source>
        <dbReference type="PROSITE-ProRule" id="PRU00159"/>
    </source>
</evidence>
<evidence type="ECO:0000255" key="6">
    <source>
        <dbReference type="PROSITE-ProRule" id="PRU10027"/>
    </source>
</evidence>
<evidence type="ECO:0000256" key="7">
    <source>
        <dbReference type="SAM" id="MobiDB-lite"/>
    </source>
</evidence>
<evidence type="ECO:0000269" key="8">
    <source>
    </source>
</evidence>
<evidence type="ECO:0000269" key="9">
    <source>
    </source>
</evidence>
<evidence type="ECO:0000269" key="10">
    <source>
    </source>
</evidence>
<evidence type="ECO:0000269" key="11">
    <source>
    </source>
</evidence>
<evidence type="ECO:0000269" key="12">
    <source>
    </source>
</evidence>
<evidence type="ECO:0000269" key="13">
    <source>
    </source>
</evidence>
<evidence type="ECO:0000269" key="14">
    <source>
    </source>
</evidence>
<evidence type="ECO:0000269" key="15">
    <source>
    </source>
</evidence>
<evidence type="ECO:0000269" key="16">
    <source>
    </source>
</evidence>
<evidence type="ECO:0000303" key="17">
    <source>
    </source>
</evidence>
<evidence type="ECO:0000303" key="18">
    <source>
    </source>
</evidence>
<evidence type="ECO:0000303" key="19">
    <source>
    </source>
</evidence>
<evidence type="ECO:0000303" key="20">
    <source ref="2"/>
</evidence>
<evidence type="ECO:0000305" key="21"/>
<evidence type="ECO:0007829" key="22">
    <source>
        <dbReference type="PDB" id="6FD3"/>
    </source>
</evidence>
<dbReference type="EC" id="2.7.11.1"/>
<dbReference type="EMBL" id="AF068864">
    <property type="protein sequence ID" value="AAC36097.1"/>
    <property type="molecule type" value="mRNA"/>
</dbReference>
<dbReference type="EMBL" id="AF155651">
    <property type="protein sequence ID" value="AAF67008.1"/>
    <property type="molecule type" value="mRNA"/>
</dbReference>
<dbReference type="EMBL" id="AB102659">
    <property type="protein sequence ID" value="BAC81128.1"/>
    <property type="molecule type" value="mRNA"/>
</dbReference>
<dbReference type="EMBL" id="AB102251">
    <property type="protein sequence ID" value="BAC80750.1"/>
    <property type="molecule type" value="Genomic_DNA"/>
</dbReference>
<dbReference type="EMBL" id="AB102252">
    <property type="protein sequence ID" value="BAC80751.1"/>
    <property type="molecule type" value="Genomic_DNA"/>
</dbReference>
<dbReference type="EMBL" id="AB102253">
    <property type="protein sequence ID" value="BAC80752.1"/>
    <property type="molecule type" value="Genomic_DNA"/>
</dbReference>
<dbReference type="EMBL" id="AB102254">
    <property type="protein sequence ID" value="BAC80753.1"/>
    <property type="molecule type" value="Genomic_DNA"/>
</dbReference>
<dbReference type="EMBL" id="AB102255">
    <property type="protein sequence ID" value="BAC80754.1"/>
    <property type="molecule type" value="Genomic_DNA"/>
</dbReference>
<dbReference type="EMBL" id="AB102256">
    <property type="protein sequence ID" value="BAC80755.1"/>
    <property type="molecule type" value="Genomic_DNA"/>
</dbReference>
<dbReference type="EMBL" id="AB102257">
    <property type="protein sequence ID" value="BAC80756.1"/>
    <property type="molecule type" value="Genomic_DNA"/>
</dbReference>
<dbReference type="EMBL" id="AB102258">
    <property type="protein sequence ID" value="BAC80757.1"/>
    <property type="molecule type" value="Genomic_DNA"/>
</dbReference>
<dbReference type="EMBL" id="AB102259">
    <property type="protein sequence ID" value="BAC80758.1"/>
    <property type="molecule type" value="Genomic_DNA"/>
</dbReference>
<dbReference type="EMBL" id="AB102260">
    <property type="protein sequence ID" value="BAC80759.1"/>
    <property type="molecule type" value="Genomic_DNA"/>
</dbReference>
<dbReference type="EMBL" id="AB102261">
    <property type="protein sequence ID" value="BAC80760.1"/>
    <property type="molecule type" value="Genomic_DNA"/>
</dbReference>
<dbReference type="EMBL" id="AB102262">
    <property type="protein sequence ID" value="BAC80761.1"/>
    <property type="molecule type" value="Genomic_DNA"/>
</dbReference>
<dbReference type="EMBL" id="AB102263">
    <property type="protein sequence ID" value="BAC80762.1"/>
    <property type="molecule type" value="Genomic_DNA"/>
</dbReference>
<dbReference type="EMBL" id="AB102264">
    <property type="protein sequence ID" value="BAC80763.1"/>
    <property type="molecule type" value="Genomic_DNA"/>
</dbReference>
<dbReference type="EMBL" id="AB102265">
    <property type="protein sequence ID" value="BAC80764.1"/>
    <property type="molecule type" value="Genomic_DNA"/>
</dbReference>
<dbReference type="EMBL" id="AB102266">
    <property type="protein sequence ID" value="BAC80765.1"/>
    <property type="molecule type" value="Genomic_DNA"/>
</dbReference>
<dbReference type="EMBL" id="AB102267">
    <property type="protein sequence ID" value="BAC80766.1"/>
    <property type="molecule type" value="Genomic_DNA"/>
</dbReference>
<dbReference type="EMBL" id="AB102268">
    <property type="protein sequence ID" value="BAC80767.1"/>
    <property type="molecule type" value="Genomic_DNA"/>
</dbReference>
<dbReference type="EMBL" id="AB102269">
    <property type="protein sequence ID" value="BAC80768.1"/>
    <property type="molecule type" value="Genomic_DNA"/>
</dbReference>
<dbReference type="EMBL" id="AB102270">
    <property type="protein sequence ID" value="BAC80769.1"/>
    <property type="molecule type" value="Genomic_DNA"/>
</dbReference>
<dbReference type="EMBL" id="AB102281">
    <property type="protein sequence ID" value="BAC80780.1"/>
    <property type="molecule type" value="Genomic_DNA"/>
</dbReference>
<dbReference type="EMBL" id="AB102282">
    <property type="protein sequence ID" value="BAC80781.1"/>
    <property type="molecule type" value="Genomic_DNA"/>
</dbReference>
<dbReference type="EMBL" id="AB102283">
    <property type="protein sequence ID" value="BAC80782.1"/>
    <property type="molecule type" value="Genomic_DNA"/>
</dbReference>
<dbReference type="EMBL" id="AB102284">
    <property type="protein sequence ID" value="BAC80783.1"/>
    <property type="molecule type" value="Genomic_DNA"/>
</dbReference>
<dbReference type="EMBL" id="AB102285">
    <property type="protein sequence ID" value="BAC80784.1"/>
    <property type="molecule type" value="Genomic_DNA"/>
</dbReference>
<dbReference type="EMBL" id="AB102286">
    <property type="protein sequence ID" value="BAC80785.1"/>
    <property type="molecule type" value="Genomic_DNA"/>
</dbReference>
<dbReference type="EMBL" id="AB102287">
    <property type="protein sequence ID" value="BAC80786.1"/>
    <property type="molecule type" value="Genomic_DNA"/>
</dbReference>
<dbReference type="EMBL" id="AB102288">
    <property type="protein sequence ID" value="BAC80787.1"/>
    <property type="molecule type" value="Genomic_DNA"/>
</dbReference>
<dbReference type="EMBL" id="AB102289">
    <property type="protein sequence ID" value="BAC80788.1"/>
    <property type="molecule type" value="Genomic_DNA"/>
</dbReference>
<dbReference type="EMBL" id="AB102290">
    <property type="protein sequence ID" value="BAC80789.1"/>
    <property type="molecule type" value="Genomic_DNA"/>
</dbReference>
<dbReference type="EMBL" id="AB102291">
    <property type="protein sequence ID" value="BAC80790.1"/>
    <property type="molecule type" value="Genomic_DNA"/>
</dbReference>
<dbReference type="EMBL" id="AB102292">
    <property type="protein sequence ID" value="BAC80791.1"/>
    <property type="molecule type" value="Genomic_DNA"/>
</dbReference>
<dbReference type="EMBL" id="AB102293">
    <property type="protein sequence ID" value="BAC80792.1"/>
    <property type="molecule type" value="Genomic_DNA"/>
</dbReference>
<dbReference type="EMBL" id="AB102294">
    <property type="protein sequence ID" value="BAC80793.1"/>
    <property type="molecule type" value="Genomic_DNA"/>
</dbReference>
<dbReference type="EMBL" id="AB102295">
    <property type="protein sequence ID" value="BAC80794.1"/>
    <property type="molecule type" value="Genomic_DNA"/>
</dbReference>
<dbReference type="EMBL" id="AB102296">
    <property type="protein sequence ID" value="BAC80795.1"/>
    <property type="molecule type" value="Genomic_DNA"/>
</dbReference>
<dbReference type="EMBL" id="AB102297">
    <property type="protein sequence ID" value="BAC80796.1"/>
    <property type="molecule type" value="Genomic_DNA"/>
</dbReference>
<dbReference type="EMBL" id="AB102298">
    <property type="protein sequence ID" value="BAC80797.1"/>
    <property type="molecule type" value="Genomic_DNA"/>
</dbReference>
<dbReference type="EMBL" id="AB102299">
    <property type="protein sequence ID" value="BAC80798.1"/>
    <property type="molecule type" value="Genomic_DNA"/>
</dbReference>
<dbReference type="EMBL" id="AB102300">
    <property type="protein sequence ID" value="BAC80799.1"/>
    <property type="molecule type" value="Genomic_DNA"/>
</dbReference>
<dbReference type="EMBL" id="AM943850">
    <property type="protein sequence ID" value="CAQ16016.1"/>
    <property type="molecule type" value="mRNA"/>
</dbReference>
<dbReference type="EMBL" id="AM943851">
    <property type="protein sequence ID" value="CAQ16017.1"/>
    <property type="molecule type" value="mRNA"/>
</dbReference>
<dbReference type="EMBL" id="AM943852">
    <property type="protein sequence ID" value="CAQ16018.1"/>
    <property type="molecule type" value="mRNA"/>
</dbReference>
<dbReference type="EMBL" id="AK290504">
    <property type="protein sequence ID" value="BAF83193.1"/>
    <property type="molecule type" value="mRNA"/>
</dbReference>
<dbReference type="EMBL" id="AL356578">
    <property type="status" value="NOT_ANNOTATED_CDS"/>
    <property type="molecule type" value="Genomic_DNA"/>
</dbReference>
<dbReference type="EMBL" id="AL357774">
    <property type="status" value="NOT_ANNOTATED_CDS"/>
    <property type="molecule type" value="Genomic_DNA"/>
</dbReference>
<dbReference type="EMBL" id="AL031117">
    <property type="status" value="NOT_ANNOTATED_CDS"/>
    <property type="molecule type" value="Genomic_DNA"/>
</dbReference>
<dbReference type="EMBL" id="AL117326">
    <property type="status" value="NOT_ANNOTATED_CDS"/>
    <property type="molecule type" value="Genomic_DNA"/>
</dbReference>
<dbReference type="EMBL" id="CH471120">
    <property type="protein sequence ID" value="EAX02654.1"/>
    <property type="molecule type" value="Genomic_DNA"/>
</dbReference>
<dbReference type="CCDS" id="CCDS14554.1">
    <molecule id="O75914-2"/>
</dbReference>
<dbReference type="CCDS" id="CCDS48151.1">
    <molecule id="O75914-3"/>
</dbReference>
<dbReference type="CCDS" id="CCDS48152.1">
    <molecule id="O75914-4"/>
</dbReference>
<dbReference type="CCDS" id="CCDS48153.1">
    <molecule id="O75914-1"/>
</dbReference>
<dbReference type="RefSeq" id="NP_001121638.1">
    <molecule id="O75914-2"/>
    <property type="nucleotide sequence ID" value="NM_001128166.3"/>
</dbReference>
<dbReference type="RefSeq" id="NP_001121639.1">
    <molecule id="O75914-2"/>
    <property type="nucleotide sequence ID" value="NM_001128167.3"/>
</dbReference>
<dbReference type="RefSeq" id="NP_001121640.1">
    <molecule id="O75914-3"/>
    <property type="nucleotide sequence ID" value="NM_001128168.3"/>
</dbReference>
<dbReference type="RefSeq" id="NP_001121644.1">
    <molecule id="O75914-4"/>
    <property type="nucleotide sequence ID" value="NM_001128172.2"/>
</dbReference>
<dbReference type="RefSeq" id="NP_001121645.1">
    <molecule id="O75914-1"/>
    <property type="nucleotide sequence ID" value="NM_001128173.3"/>
</dbReference>
<dbReference type="RefSeq" id="NP_001311254.1">
    <molecule id="O75914-2"/>
    <property type="nucleotide sequence ID" value="NM_001324325.2"/>
</dbReference>
<dbReference type="RefSeq" id="NP_001311255.1">
    <molecule id="O75914-2"/>
    <property type="nucleotide sequence ID" value="NM_001324326.2"/>
</dbReference>
<dbReference type="RefSeq" id="NP_001311256.1">
    <molecule id="O75914-1"/>
    <property type="nucleotide sequence ID" value="NM_001324327.2"/>
</dbReference>
<dbReference type="RefSeq" id="NP_001311257.1">
    <molecule id="O75914-1"/>
    <property type="nucleotide sequence ID" value="NM_001324328.2"/>
</dbReference>
<dbReference type="RefSeq" id="NP_001311258.1">
    <molecule id="O75914-1"/>
    <property type="nucleotide sequence ID" value="NM_001324329.2"/>
</dbReference>
<dbReference type="RefSeq" id="NP_001311259.1">
    <molecule id="O75914-2"/>
    <property type="nucleotide sequence ID" value="NM_001324330.2"/>
</dbReference>
<dbReference type="RefSeq" id="NP_001311260.1">
    <molecule id="O75914-2"/>
    <property type="nucleotide sequence ID" value="NM_001324331.2"/>
</dbReference>
<dbReference type="RefSeq" id="NP_001311261.1">
    <molecule id="O75914-2"/>
    <property type="nucleotide sequence ID" value="NM_001324332.2"/>
</dbReference>
<dbReference type="RefSeq" id="NP_001311262.1">
    <molecule id="O75914-1"/>
    <property type="nucleotide sequence ID" value="NM_001324333.2"/>
</dbReference>
<dbReference type="RefSeq" id="NP_001311263.1">
    <molecule id="O75914-2"/>
    <property type="nucleotide sequence ID" value="NM_001324334.2"/>
</dbReference>
<dbReference type="RefSeq" id="NP_002569.1">
    <molecule id="O75914-2"/>
    <property type="nucleotide sequence ID" value="NM_002578.5"/>
</dbReference>
<dbReference type="RefSeq" id="XP_016885046.1">
    <molecule id="O75914-1"/>
    <property type="nucleotide sequence ID" value="XM_017029557.2"/>
</dbReference>
<dbReference type="RefSeq" id="XP_016885050.1">
    <property type="nucleotide sequence ID" value="XM_017029561.1"/>
</dbReference>
<dbReference type="RefSeq" id="XP_016885052.1">
    <molecule id="O75914-3"/>
    <property type="nucleotide sequence ID" value="XM_017029563.2"/>
</dbReference>
<dbReference type="RefSeq" id="XP_047298104.1">
    <molecule id="O75914-2"/>
    <property type="nucleotide sequence ID" value="XM_047442148.1"/>
</dbReference>
<dbReference type="RefSeq" id="XP_047298105.1">
    <molecule id="O75914-2"/>
    <property type="nucleotide sequence ID" value="XM_047442149.1"/>
</dbReference>
<dbReference type="RefSeq" id="XP_054183127.1">
    <molecule id="O75914-1"/>
    <property type="nucleotide sequence ID" value="XM_054327152.1"/>
</dbReference>
<dbReference type="RefSeq" id="XP_054183134.1">
    <molecule id="O75914-2"/>
    <property type="nucleotide sequence ID" value="XM_054327159.1"/>
</dbReference>
<dbReference type="RefSeq" id="XP_054183135.1">
    <molecule id="O75914-2"/>
    <property type="nucleotide sequence ID" value="XM_054327160.1"/>
</dbReference>
<dbReference type="RefSeq" id="XP_054183137.1">
    <molecule id="O75914-3"/>
    <property type="nucleotide sequence ID" value="XM_054327162.1"/>
</dbReference>
<dbReference type="PDB" id="6FD3">
    <property type="method" value="X-ray"/>
    <property type="resolution" value="1.52 A"/>
    <property type="chains" value="A=261-559"/>
</dbReference>
<dbReference type="PDBsum" id="6FD3"/>
<dbReference type="SMR" id="O75914"/>
<dbReference type="BioGRID" id="111099">
    <property type="interactions" value="35"/>
</dbReference>
<dbReference type="FunCoup" id="O75914">
    <property type="interactions" value="1542"/>
</dbReference>
<dbReference type="IntAct" id="O75914">
    <property type="interactions" value="20"/>
</dbReference>
<dbReference type="MINT" id="O75914"/>
<dbReference type="STRING" id="9606.ENSP00000353864"/>
<dbReference type="BindingDB" id="O75914"/>
<dbReference type="ChEMBL" id="CHEMBL2999"/>
<dbReference type="DrugBank" id="DB12010">
    <property type="generic name" value="Fostamatinib"/>
</dbReference>
<dbReference type="DrugCentral" id="O75914"/>
<dbReference type="GuidetoPHARMACOLOGY" id="2135"/>
<dbReference type="GlyGen" id="O75914">
    <property type="glycosylation" value="2 sites"/>
</dbReference>
<dbReference type="iPTMnet" id="O75914"/>
<dbReference type="MetOSite" id="O75914"/>
<dbReference type="PhosphoSitePlus" id="O75914"/>
<dbReference type="BioMuta" id="PAK3"/>
<dbReference type="jPOST" id="O75914"/>
<dbReference type="MassIVE" id="O75914"/>
<dbReference type="PaxDb" id="9606-ENSP00000353864"/>
<dbReference type="PeptideAtlas" id="O75914"/>
<dbReference type="ProteomicsDB" id="50266">
    <molecule id="O75914-1"/>
</dbReference>
<dbReference type="ProteomicsDB" id="50267">
    <molecule id="O75914-2"/>
</dbReference>
<dbReference type="ProteomicsDB" id="50268">
    <molecule id="O75914-3"/>
</dbReference>
<dbReference type="ProteomicsDB" id="50269">
    <molecule id="O75914-4"/>
</dbReference>
<dbReference type="Antibodypedia" id="29512">
    <property type="antibodies" value="519 antibodies from 37 providers"/>
</dbReference>
<dbReference type="DNASU" id="5063"/>
<dbReference type="Ensembl" id="ENST00000262836.6">
    <molecule id="O75914-1"/>
    <property type="protein sequence ID" value="ENSP00000262836.4"/>
    <property type="gene ID" value="ENSG00000077264.17"/>
</dbReference>
<dbReference type="Ensembl" id="ENST00000360648.8">
    <molecule id="O75914-3"/>
    <property type="protein sequence ID" value="ENSP00000353864.4"/>
    <property type="gene ID" value="ENSG00000077264.17"/>
</dbReference>
<dbReference type="Ensembl" id="ENST00000372007.10">
    <molecule id="O75914-2"/>
    <property type="protein sequence ID" value="ENSP00000361077.4"/>
    <property type="gene ID" value="ENSG00000077264.17"/>
</dbReference>
<dbReference type="Ensembl" id="ENST00000372010.5">
    <molecule id="O75914-1"/>
    <property type="protein sequence ID" value="ENSP00000361080.1"/>
    <property type="gene ID" value="ENSG00000077264.17"/>
</dbReference>
<dbReference type="Ensembl" id="ENST00000417227.5">
    <molecule id="O75914-4"/>
    <property type="protein sequence ID" value="ENSP00000389172.1"/>
    <property type="gene ID" value="ENSG00000077264.17"/>
</dbReference>
<dbReference type="Ensembl" id="ENST00000425146.5">
    <molecule id="O75914-2"/>
    <property type="protein sequence ID" value="ENSP00000401982.1"/>
    <property type="gene ID" value="ENSG00000077264.17"/>
</dbReference>
<dbReference type="Ensembl" id="ENST00000446737.5">
    <molecule id="O75914-2"/>
    <property type="protein sequence ID" value="ENSP00000410853.1"/>
    <property type="gene ID" value="ENSG00000077264.17"/>
</dbReference>
<dbReference type="Ensembl" id="ENST00000518291.6">
    <molecule id="O75914-3"/>
    <property type="protein sequence ID" value="ENSP00000428921.1"/>
    <property type="gene ID" value="ENSG00000077264.17"/>
</dbReference>
<dbReference type="Ensembl" id="ENST00000519681.5">
    <molecule id="O75914-4"/>
    <property type="protein sequence ID" value="ENSP00000429113.1"/>
    <property type="gene ID" value="ENSG00000077264.17"/>
</dbReference>
<dbReference type="GeneID" id="5063"/>
<dbReference type="KEGG" id="hsa:5063"/>
<dbReference type="MANE-Select" id="ENST00000372007.10">
    <molecule id="O75914-2"/>
    <property type="protein sequence ID" value="ENSP00000361077.4"/>
    <property type="RefSeq nucleotide sequence ID" value="NM_002578.5"/>
    <property type="RefSeq protein sequence ID" value="NP_002569.1"/>
</dbReference>
<dbReference type="UCSC" id="uc004eoz.3">
    <molecule id="O75914-1"/>
    <property type="organism name" value="human"/>
</dbReference>
<dbReference type="AGR" id="HGNC:8592"/>
<dbReference type="CTD" id="5063"/>
<dbReference type="DisGeNET" id="5063"/>
<dbReference type="GeneCards" id="PAK3"/>
<dbReference type="HGNC" id="HGNC:8592">
    <property type="gene designation" value="PAK3"/>
</dbReference>
<dbReference type="HPA" id="ENSG00000077264">
    <property type="expression patterns" value="Tissue enhanced (brain, pancreas, pituitary gland)"/>
</dbReference>
<dbReference type="MalaCards" id="PAK3"/>
<dbReference type="MIM" id="300142">
    <property type="type" value="gene"/>
</dbReference>
<dbReference type="MIM" id="300558">
    <property type="type" value="phenotype"/>
</dbReference>
<dbReference type="neXtProt" id="NX_O75914"/>
<dbReference type="OpenTargets" id="ENSG00000077264"/>
<dbReference type="Orphanet" id="777">
    <property type="disease" value="X-linked non-syndromic intellectual disability"/>
</dbReference>
<dbReference type="PharmGKB" id="PA32919"/>
<dbReference type="VEuPathDB" id="HostDB:ENSG00000077264"/>
<dbReference type="eggNOG" id="KOG0578">
    <property type="taxonomic scope" value="Eukaryota"/>
</dbReference>
<dbReference type="GeneTree" id="ENSGT00950000182988"/>
<dbReference type="HOGENOM" id="CLU_000288_26_6_1"/>
<dbReference type="InParanoid" id="O75914"/>
<dbReference type="OMA" id="KKGMFTF"/>
<dbReference type="OrthoDB" id="1022360at2759"/>
<dbReference type="PAN-GO" id="O75914">
    <property type="GO annotations" value="7 GO annotations based on evolutionary models"/>
</dbReference>
<dbReference type="PhylomeDB" id="O75914"/>
<dbReference type="TreeFam" id="TF105351"/>
<dbReference type="BRENDA" id="2.7.11.1">
    <property type="organism ID" value="2681"/>
</dbReference>
<dbReference type="PathwayCommons" id="O75914"/>
<dbReference type="Reactome" id="R-HSA-202433">
    <property type="pathway name" value="Generation of second messenger molecules"/>
</dbReference>
<dbReference type="Reactome" id="R-HSA-389359">
    <property type="pathway name" value="CD28 dependent Vav1 pathway"/>
</dbReference>
<dbReference type="Reactome" id="R-HSA-3928664">
    <property type="pathway name" value="Ephrin signaling"/>
</dbReference>
<dbReference type="Reactome" id="R-HSA-399954">
    <property type="pathway name" value="Sema3A PAK dependent Axon repulsion"/>
</dbReference>
<dbReference type="Reactome" id="R-HSA-428540">
    <property type="pathway name" value="Activation of RAC1"/>
</dbReference>
<dbReference type="Reactome" id="R-HSA-5218920">
    <property type="pathway name" value="VEGFR2 mediated vascular permeability"/>
</dbReference>
<dbReference type="Reactome" id="R-HSA-5621575">
    <property type="pathway name" value="CD209 (DC-SIGN) signaling"/>
</dbReference>
<dbReference type="Reactome" id="R-HSA-5627123">
    <property type="pathway name" value="RHO GTPases activate PAKs"/>
</dbReference>
<dbReference type="Reactome" id="R-HSA-5687128">
    <property type="pathway name" value="MAPK6/MAPK4 signaling"/>
</dbReference>
<dbReference type="Reactome" id="R-HSA-9013148">
    <property type="pathway name" value="CDC42 GTPase cycle"/>
</dbReference>
<dbReference type="Reactome" id="R-HSA-9013149">
    <property type="pathway name" value="RAC1 GTPase cycle"/>
</dbReference>
<dbReference type="Reactome" id="R-HSA-9013409">
    <property type="pathway name" value="RHOJ GTPase cycle"/>
</dbReference>
<dbReference type="Reactome" id="R-HSA-9013420">
    <property type="pathway name" value="RHOU GTPase cycle"/>
</dbReference>
<dbReference type="SignaLink" id="O75914"/>
<dbReference type="SIGNOR" id="O75914"/>
<dbReference type="BioGRID-ORCS" id="5063">
    <property type="hits" value="13 hits in 809 CRISPR screens"/>
</dbReference>
<dbReference type="ChiTaRS" id="PAK3">
    <property type="organism name" value="human"/>
</dbReference>
<dbReference type="GeneWiki" id="PAK3"/>
<dbReference type="GenomeRNAi" id="5063"/>
<dbReference type="Pharos" id="O75914">
    <property type="development level" value="Tchem"/>
</dbReference>
<dbReference type="PRO" id="PR:O75914"/>
<dbReference type="Proteomes" id="UP000005640">
    <property type="component" value="Chromosome X"/>
</dbReference>
<dbReference type="RNAct" id="O75914">
    <property type="molecule type" value="protein"/>
</dbReference>
<dbReference type="Bgee" id="ENSG00000077264">
    <property type="expression patterns" value="Expressed in middle temporal gyrus and 157 other cell types or tissues"/>
</dbReference>
<dbReference type="ExpressionAtlas" id="O75914">
    <property type="expression patterns" value="baseline and differential"/>
</dbReference>
<dbReference type="GO" id="GO:0005737">
    <property type="term" value="C:cytoplasm"/>
    <property type="evidence" value="ECO:0000318"/>
    <property type="project" value="GO_Central"/>
</dbReference>
<dbReference type="GO" id="GO:0005829">
    <property type="term" value="C:cytosol"/>
    <property type="evidence" value="ECO:0000304"/>
    <property type="project" value="Reactome"/>
</dbReference>
<dbReference type="GO" id="GO:0098978">
    <property type="term" value="C:glutamatergic synapse"/>
    <property type="evidence" value="ECO:0007669"/>
    <property type="project" value="Ensembl"/>
</dbReference>
<dbReference type="GO" id="GO:0005886">
    <property type="term" value="C:plasma membrane"/>
    <property type="evidence" value="ECO:0000304"/>
    <property type="project" value="Reactome"/>
</dbReference>
<dbReference type="GO" id="GO:0014069">
    <property type="term" value="C:postsynaptic density"/>
    <property type="evidence" value="ECO:0007669"/>
    <property type="project" value="Ensembl"/>
</dbReference>
<dbReference type="GO" id="GO:0005524">
    <property type="term" value="F:ATP binding"/>
    <property type="evidence" value="ECO:0007669"/>
    <property type="project" value="UniProtKB-KW"/>
</dbReference>
<dbReference type="GO" id="GO:0004708">
    <property type="term" value="F:MAP kinase kinase activity"/>
    <property type="evidence" value="ECO:0000314"/>
    <property type="project" value="UniProtKB"/>
</dbReference>
<dbReference type="GO" id="GO:0046872">
    <property type="term" value="F:metal ion binding"/>
    <property type="evidence" value="ECO:0007669"/>
    <property type="project" value="UniProtKB-KW"/>
</dbReference>
<dbReference type="GO" id="GO:0106310">
    <property type="term" value="F:protein serine kinase activity"/>
    <property type="evidence" value="ECO:0007669"/>
    <property type="project" value="RHEA"/>
</dbReference>
<dbReference type="GO" id="GO:0004674">
    <property type="term" value="F:protein serine/threonine kinase activity"/>
    <property type="evidence" value="ECO:0000269"/>
    <property type="project" value="Reactome"/>
</dbReference>
<dbReference type="GO" id="GO:0017124">
    <property type="term" value="F:SH3 domain binding"/>
    <property type="evidence" value="ECO:0007669"/>
    <property type="project" value="UniProtKB-KW"/>
</dbReference>
<dbReference type="GO" id="GO:0031267">
    <property type="term" value="F:small GTPase binding"/>
    <property type="evidence" value="ECO:0007669"/>
    <property type="project" value="Ensembl"/>
</dbReference>
<dbReference type="GO" id="GO:0007409">
    <property type="term" value="P:axonogenesis"/>
    <property type="evidence" value="ECO:0000250"/>
    <property type="project" value="UniProtKB"/>
</dbReference>
<dbReference type="GO" id="GO:0016477">
    <property type="term" value="P:cell migration"/>
    <property type="evidence" value="ECO:0000318"/>
    <property type="project" value="GO_Central"/>
</dbReference>
<dbReference type="GO" id="GO:0009267">
    <property type="term" value="P:cellular response to starvation"/>
    <property type="evidence" value="ECO:0000318"/>
    <property type="project" value="GO_Central"/>
</dbReference>
<dbReference type="GO" id="GO:0016358">
    <property type="term" value="P:dendrite development"/>
    <property type="evidence" value="ECO:0000250"/>
    <property type="project" value="UniProtKB"/>
</dbReference>
<dbReference type="GO" id="GO:0060997">
    <property type="term" value="P:dendritic spine morphogenesis"/>
    <property type="evidence" value="ECO:0000250"/>
    <property type="project" value="UniProtKB"/>
</dbReference>
<dbReference type="GO" id="GO:0048013">
    <property type="term" value="P:ephrin receptor signaling pathway"/>
    <property type="evidence" value="ECO:0000304"/>
    <property type="project" value="Reactome"/>
</dbReference>
<dbReference type="GO" id="GO:0035556">
    <property type="term" value="P:intracellular signal transduction"/>
    <property type="evidence" value="ECO:0000318"/>
    <property type="project" value="GO_Central"/>
</dbReference>
<dbReference type="GO" id="GO:0032956">
    <property type="term" value="P:regulation of actin cytoskeleton organization"/>
    <property type="evidence" value="ECO:0000318"/>
    <property type="project" value="GO_Central"/>
</dbReference>
<dbReference type="GO" id="GO:0030833">
    <property type="term" value="P:regulation of actin filament polymerization"/>
    <property type="evidence" value="ECO:0000314"/>
    <property type="project" value="UniProtKB"/>
</dbReference>
<dbReference type="GO" id="GO:0050770">
    <property type="term" value="P:regulation of axonogenesis"/>
    <property type="evidence" value="ECO:0000318"/>
    <property type="project" value="GO_Central"/>
</dbReference>
<dbReference type="GO" id="GO:0043408">
    <property type="term" value="P:regulation of MAPK cascade"/>
    <property type="evidence" value="ECO:0000318"/>
    <property type="project" value="GO_Central"/>
</dbReference>
<dbReference type="GO" id="GO:0099175">
    <property type="term" value="P:regulation of postsynapse organization"/>
    <property type="evidence" value="ECO:0007669"/>
    <property type="project" value="Ensembl"/>
</dbReference>
<dbReference type="GO" id="GO:0002223">
    <property type="term" value="P:stimulatory C-type lectin receptor signaling pathway"/>
    <property type="evidence" value="ECO:0000304"/>
    <property type="project" value="Reactome"/>
</dbReference>
<dbReference type="GO" id="GO:0050808">
    <property type="term" value="P:synapse organization"/>
    <property type="evidence" value="ECO:0000304"/>
    <property type="project" value="UniProtKB"/>
</dbReference>
<dbReference type="CDD" id="cd01093">
    <property type="entry name" value="CRIB_PAK_like"/>
    <property type="match status" value="1"/>
</dbReference>
<dbReference type="CDD" id="cd06656">
    <property type="entry name" value="STKc_PAK3"/>
    <property type="match status" value="1"/>
</dbReference>
<dbReference type="FunFam" id="1.10.510.10:FF:000011">
    <property type="entry name" value="Non-specific serine/threonine protein kinase"/>
    <property type="match status" value="1"/>
</dbReference>
<dbReference type="FunFam" id="3.30.200.20:FF:000069">
    <property type="entry name" value="Non-specific serine/threonine protein kinase"/>
    <property type="match status" value="1"/>
</dbReference>
<dbReference type="FunFam" id="3.90.810.10:FF:000001">
    <property type="entry name" value="Non-specific serine/threonine protein kinase"/>
    <property type="match status" value="1"/>
</dbReference>
<dbReference type="Gene3D" id="3.90.810.10">
    <property type="entry name" value="CRIB domain"/>
    <property type="match status" value="1"/>
</dbReference>
<dbReference type="Gene3D" id="3.30.200.20">
    <property type="entry name" value="Phosphorylase Kinase, domain 1"/>
    <property type="match status" value="1"/>
</dbReference>
<dbReference type="Gene3D" id="1.10.510.10">
    <property type="entry name" value="Transferase(Phosphotransferase) domain 1"/>
    <property type="match status" value="1"/>
</dbReference>
<dbReference type="InterPro" id="IPR000095">
    <property type="entry name" value="CRIB_dom"/>
</dbReference>
<dbReference type="InterPro" id="IPR036936">
    <property type="entry name" value="CRIB_dom_sf"/>
</dbReference>
<dbReference type="InterPro" id="IPR011009">
    <property type="entry name" value="Kinase-like_dom_sf"/>
</dbReference>
<dbReference type="InterPro" id="IPR051931">
    <property type="entry name" value="PAK3-like"/>
</dbReference>
<dbReference type="InterPro" id="IPR033923">
    <property type="entry name" value="PAK_BD"/>
</dbReference>
<dbReference type="InterPro" id="IPR000719">
    <property type="entry name" value="Prot_kinase_dom"/>
</dbReference>
<dbReference type="InterPro" id="IPR017441">
    <property type="entry name" value="Protein_kinase_ATP_BS"/>
</dbReference>
<dbReference type="InterPro" id="IPR008271">
    <property type="entry name" value="Ser/Thr_kinase_AS"/>
</dbReference>
<dbReference type="InterPro" id="IPR035063">
    <property type="entry name" value="STK_PAK3"/>
</dbReference>
<dbReference type="PANTHER" id="PTHR45832">
    <property type="entry name" value="SERINE/THREONINE-PROTEIN KINASE SAMKA-RELATED-RELATED"/>
    <property type="match status" value="1"/>
</dbReference>
<dbReference type="PANTHER" id="PTHR45832:SF11">
    <property type="entry name" value="SERINE_THREONINE-PROTEIN KINASE PAK 3"/>
    <property type="match status" value="1"/>
</dbReference>
<dbReference type="Pfam" id="PF00786">
    <property type="entry name" value="PBD"/>
    <property type="match status" value="1"/>
</dbReference>
<dbReference type="Pfam" id="PF00069">
    <property type="entry name" value="Pkinase"/>
    <property type="match status" value="1"/>
</dbReference>
<dbReference type="SMART" id="SM00285">
    <property type="entry name" value="PBD"/>
    <property type="match status" value="1"/>
</dbReference>
<dbReference type="SMART" id="SM00220">
    <property type="entry name" value="S_TKc"/>
    <property type="match status" value="1"/>
</dbReference>
<dbReference type="SUPFAM" id="SSF56112">
    <property type="entry name" value="Protein kinase-like (PK-like)"/>
    <property type="match status" value="1"/>
</dbReference>
<dbReference type="PROSITE" id="PS50108">
    <property type="entry name" value="CRIB"/>
    <property type="match status" value="1"/>
</dbReference>
<dbReference type="PROSITE" id="PS00107">
    <property type="entry name" value="PROTEIN_KINASE_ATP"/>
    <property type="match status" value="1"/>
</dbReference>
<dbReference type="PROSITE" id="PS50011">
    <property type="entry name" value="PROTEIN_KINASE_DOM"/>
    <property type="match status" value="1"/>
</dbReference>
<dbReference type="PROSITE" id="PS00108">
    <property type="entry name" value="PROTEIN_KINASE_ST"/>
    <property type="match status" value="1"/>
</dbReference>
<feature type="chain" id="PRO_0000086469" description="Serine/threonine-protein kinase PAK 3">
    <location>
        <begin position="1"/>
        <end position="559"/>
    </location>
</feature>
<feature type="domain" description="CRIB" evidence="4">
    <location>
        <begin position="70"/>
        <end position="83"/>
    </location>
</feature>
<feature type="domain" description="Protein kinase" evidence="5">
    <location>
        <begin position="283"/>
        <end position="534"/>
    </location>
</feature>
<feature type="region of interest" description="Disordered" evidence="7">
    <location>
        <begin position="1"/>
        <end position="72"/>
    </location>
</feature>
<feature type="region of interest" description="Autoregulatory region" evidence="1">
    <location>
        <begin position="65"/>
        <end position="150"/>
    </location>
</feature>
<feature type="region of interest" description="GTPase-binding" evidence="1">
    <location>
        <begin position="65"/>
        <end position="123"/>
    </location>
</feature>
<feature type="region of interest" description="Linker">
    <location>
        <begin position="84"/>
        <end position="282"/>
    </location>
</feature>
<feature type="region of interest" description="Disordered" evidence="7">
    <location>
        <begin position="164"/>
        <end position="212"/>
    </location>
</feature>
<feature type="region of interest" description="Disordered" evidence="7">
    <location>
        <begin position="228"/>
        <end position="262"/>
    </location>
</feature>
<feature type="compositionally biased region" description="Polar residues" evidence="7">
    <location>
        <begin position="18"/>
        <end position="32"/>
    </location>
</feature>
<feature type="compositionally biased region" description="Basic and acidic residues" evidence="7">
    <location>
        <begin position="63"/>
        <end position="72"/>
    </location>
</feature>
<feature type="compositionally biased region" description="Acidic residues" evidence="7">
    <location>
        <begin position="186"/>
        <end position="201"/>
    </location>
</feature>
<feature type="compositionally biased region" description="Polar residues" evidence="7">
    <location>
        <begin position="239"/>
        <end position="250"/>
    </location>
</feature>
<feature type="active site" description="Proton acceptor" evidence="5 6">
    <location>
        <position position="402"/>
    </location>
</feature>
<feature type="binding site" evidence="5">
    <location>
        <begin position="289"/>
        <end position="297"/>
    </location>
    <ligand>
        <name>ATP</name>
        <dbReference type="ChEBI" id="CHEBI:30616"/>
    </ligand>
</feature>
<feature type="binding site" evidence="5">
    <location>
        <position position="312"/>
    </location>
    <ligand>
        <name>ATP</name>
        <dbReference type="ChEBI" id="CHEBI:30616"/>
    </ligand>
</feature>
<feature type="modified residue" description="Phosphoserine" evidence="3">
    <location>
        <position position="2"/>
    </location>
</feature>
<feature type="modified residue" description="Phosphoserine; by autocatalysis" evidence="3">
    <location>
        <position position="50"/>
    </location>
</feature>
<feature type="modified residue" description="Phosphoserine; by autocatalysis" evidence="3">
    <location>
        <position position="154"/>
    </location>
</feature>
<feature type="modified residue" description="Phosphoserine" evidence="2">
    <location>
        <position position="186"/>
    </location>
</feature>
<feature type="modified residue" description="Phosphothreonine; by autocatalysis" evidence="3">
    <location>
        <position position="436"/>
    </location>
</feature>
<feature type="splice variant" id="VSP_041840" description="In isoform 4." evidence="18">
    <original>TPDLYGSQMCPGKLPE</original>
    <variation>TNSPFQTSRPVTVASSQSEGKM</variation>
    <location>
        <begin position="92"/>
        <end position="107"/>
    </location>
</feature>
<feature type="splice variant" id="VSP_041839" description="In isoform 3." evidence="18">
    <original>T</original>
    <variation>TNSPFQTSRPVTVASSQSEGKM</variation>
    <location>
        <position position="92"/>
    </location>
</feature>
<feature type="splice variant" id="VSP_010242" description="In isoform 2." evidence="17 19 20">
    <location>
        <begin position="93"/>
        <end position="107"/>
    </location>
</feature>
<feature type="sequence variant" id="VAR_023825" description="In XLID30; dbSNP:rs121434612." evidence="9">
    <original>R</original>
    <variation>C</variation>
    <location>
        <position position="67"/>
    </location>
</feature>
<feature type="sequence variant" id="VAR_023826" description="In XLID30; dbSNP:rs121434613." evidence="11">
    <original>A</original>
    <variation>E</variation>
    <location>
        <position position="380"/>
    </location>
</feature>
<feature type="sequence variant" id="VAR_046764" description="In a colorectal adenocarcinoma sample; somatic mutation." evidence="13">
    <original>T</original>
    <variation>S</variation>
    <location>
        <position position="440"/>
    </location>
</feature>
<feature type="sequence conflict" description="In Ref. 2; AAF67008." evidence="21" ref="2">
    <original>S</original>
    <variation>F</variation>
    <location>
        <position position="32"/>
    </location>
</feature>
<feature type="sequence conflict" description="In Ref. 2; AAF67008." evidence="21" ref="2">
    <original>P</original>
    <variation>S</variation>
    <location>
        <position position="36"/>
    </location>
</feature>
<feature type="sequence conflict" description="In Ref. 2; AAF67008." evidence="21" ref="2">
    <original>P</original>
    <variation>S</variation>
    <location>
        <position position="73"/>
    </location>
</feature>
<feature type="sequence conflict" description="In Ref. 2; AAF67008." evidence="21" ref="2">
    <original>PE</original>
    <variation>SL</variation>
    <location>
        <begin position="106"/>
        <end position="107"/>
    </location>
</feature>
<feature type="sequence conflict" description="In Ref. 2; AAF67008." evidence="21" ref="2">
    <original>T</original>
    <variation>P</variation>
    <location>
        <position position="123"/>
    </location>
</feature>
<feature type="sequence conflict" description="In Ref. 2; AAF67008." evidence="21" ref="2">
    <original>QKKN</original>
    <variation>PEEE</variation>
    <location>
        <begin position="127"/>
        <end position="130"/>
    </location>
</feature>
<feature type="sequence conflict" description="In Ref. 2; AAF67008." evidence="21" ref="2">
    <original>VLDV</original>
    <variation>CSRC</variation>
    <location>
        <begin position="134"/>
        <end position="137"/>
    </location>
</feature>
<feature type="sequence conflict" description="In Ref. 2; AAF67008." evidence="21" ref="2">
    <original>TVN</original>
    <variation>PVT</variation>
    <location>
        <begin position="146"/>
        <end position="148"/>
    </location>
</feature>
<feature type="sequence conflict" description="In Ref. 2; AAF67008." evidence="21" ref="2">
    <original>T</original>
    <variation>P</variation>
    <location>
        <position position="175"/>
    </location>
</feature>
<feature type="helix" evidence="22">
    <location>
        <begin position="263"/>
        <end position="273"/>
    </location>
</feature>
<feature type="strand" evidence="22">
    <location>
        <begin position="274"/>
        <end position="277"/>
    </location>
</feature>
<feature type="helix" evidence="22">
    <location>
        <begin position="279"/>
        <end position="281"/>
    </location>
</feature>
<feature type="strand" evidence="22">
    <location>
        <begin position="283"/>
        <end position="291"/>
    </location>
</feature>
<feature type="strand" evidence="22">
    <location>
        <begin position="293"/>
        <end position="302"/>
    </location>
</feature>
<feature type="turn" evidence="22">
    <location>
        <begin position="303"/>
        <end position="305"/>
    </location>
</feature>
<feature type="strand" evidence="22">
    <location>
        <begin position="308"/>
        <end position="315"/>
    </location>
</feature>
<feature type="helix" evidence="22">
    <location>
        <begin position="316"/>
        <end position="318"/>
    </location>
</feature>
<feature type="helix" evidence="22">
    <location>
        <begin position="324"/>
        <end position="334"/>
    </location>
</feature>
<feature type="strand" evidence="22">
    <location>
        <begin position="343"/>
        <end position="349"/>
    </location>
</feature>
<feature type="strand" evidence="22">
    <location>
        <begin position="352"/>
        <end position="358"/>
    </location>
</feature>
<feature type="helix" evidence="22">
    <location>
        <begin position="365"/>
        <end position="371"/>
    </location>
</feature>
<feature type="helix" evidence="22">
    <location>
        <begin position="376"/>
        <end position="395"/>
    </location>
</feature>
<feature type="helix" evidence="22">
    <location>
        <begin position="405"/>
        <end position="407"/>
    </location>
</feature>
<feature type="strand" evidence="22">
    <location>
        <begin position="408"/>
        <end position="410"/>
    </location>
</feature>
<feature type="strand" evidence="22">
    <location>
        <begin position="416"/>
        <end position="418"/>
    </location>
</feature>
<feature type="helix" evidence="22">
    <location>
        <begin position="441"/>
        <end position="443"/>
    </location>
</feature>
<feature type="helix" evidence="22">
    <location>
        <begin position="446"/>
        <end position="449"/>
    </location>
</feature>
<feature type="helix" evidence="22">
    <location>
        <begin position="458"/>
        <end position="472"/>
    </location>
</feature>
<feature type="turn" evidence="22">
    <location>
        <begin position="476"/>
        <end position="479"/>
    </location>
</feature>
<feature type="helix" evidence="22">
    <location>
        <begin position="482"/>
        <end position="492"/>
    </location>
</feature>
<feature type="helix" evidence="22">
    <location>
        <begin position="500"/>
        <end position="502"/>
    </location>
</feature>
<feature type="helix" evidence="22">
    <location>
        <begin position="505"/>
        <end position="514"/>
    </location>
</feature>
<feature type="turn" evidence="22">
    <location>
        <begin position="519"/>
        <end position="521"/>
    </location>
</feature>
<feature type="helix" evidence="22">
    <location>
        <begin position="525"/>
        <end position="528"/>
    </location>
</feature>
<feature type="helix" evidence="22">
    <location>
        <begin position="532"/>
        <end position="536"/>
    </location>
</feature>
<feature type="helix" evidence="22">
    <location>
        <begin position="540"/>
        <end position="543"/>
    </location>
</feature>
<feature type="helix" evidence="22">
    <location>
        <begin position="544"/>
        <end position="555"/>
    </location>
</feature>